<gene>
    <name evidence="1" type="primary">glyA</name>
    <name type="ordered locus">BRE_605</name>
</gene>
<name>GLYA_BORRA</name>
<protein>
    <recommendedName>
        <fullName evidence="1">Serine hydroxymethyltransferase</fullName>
        <shortName evidence="1">SHMT</shortName>
        <shortName evidence="1">Serine methylase</shortName>
        <ecNumber evidence="1">2.1.2.1</ecNumber>
    </recommendedName>
</protein>
<dbReference type="EC" id="2.1.2.1" evidence="1"/>
<dbReference type="EMBL" id="CP000993">
    <property type="protein sequence ID" value="ACH94833.1"/>
    <property type="molecule type" value="Genomic_DNA"/>
</dbReference>
<dbReference type="RefSeq" id="WP_012539027.1">
    <property type="nucleotide sequence ID" value="NC_011244.1"/>
</dbReference>
<dbReference type="SMR" id="B5RPU9"/>
<dbReference type="KEGG" id="bre:BRE_605"/>
<dbReference type="HOGENOM" id="CLU_022477_2_1_12"/>
<dbReference type="UniPathway" id="UPA00193"/>
<dbReference type="UniPathway" id="UPA00288">
    <property type="reaction ID" value="UER01023"/>
</dbReference>
<dbReference type="Proteomes" id="UP000000612">
    <property type="component" value="Chromosome"/>
</dbReference>
<dbReference type="GO" id="GO:0005829">
    <property type="term" value="C:cytosol"/>
    <property type="evidence" value="ECO:0007669"/>
    <property type="project" value="TreeGrafter"/>
</dbReference>
<dbReference type="GO" id="GO:0004372">
    <property type="term" value="F:glycine hydroxymethyltransferase activity"/>
    <property type="evidence" value="ECO:0007669"/>
    <property type="project" value="UniProtKB-UniRule"/>
</dbReference>
<dbReference type="GO" id="GO:0030170">
    <property type="term" value="F:pyridoxal phosphate binding"/>
    <property type="evidence" value="ECO:0007669"/>
    <property type="project" value="UniProtKB-UniRule"/>
</dbReference>
<dbReference type="GO" id="GO:0019264">
    <property type="term" value="P:glycine biosynthetic process from serine"/>
    <property type="evidence" value="ECO:0007669"/>
    <property type="project" value="UniProtKB-UniRule"/>
</dbReference>
<dbReference type="GO" id="GO:0035999">
    <property type="term" value="P:tetrahydrofolate interconversion"/>
    <property type="evidence" value="ECO:0007669"/>
    <property type="project" value="UniProtKB-UniRule"/>
</dbReference>
<dbReference type="CDD" id="cd00378">
    <property type="entry name" value="SHMT"/>
    <property type="match status" value="1"/>
</dbReference>
<dbReference type="FunFam" id="3.40.640.10:FF:000001">
    <property type="entry name" value="Serine hydroxymethyltransferase"/>
    <property type="match status" value="1"/>
</dbReference>
<dbReference type="Gene3D" id="3.90.1150.10">
    <property type="entry name" value="Aspartate Aminotransferase, domain 1"/>
    <property type="match status" value="1"/>
</dbReference>
<dbReference type="Gene3D" id="3.40.640.10">
    <property type="entry name" value="Type I PLP-dependent aspartate aminotransferase-like (Major domain)"/>
    <property type="match status" value="1"/>
</dbReference>
<dbReference type="HAMAP" id="MF_00051">
    <property type="entry name" value="SHMT"/>
    <property type="match status" value="1"/>
</dbReference>
<dbReference type="InterPro" id="IPR015424">
    <property type="entry name" value="PyrdxlP-dep_Trfase"/>
</dbReference>
<dbReference type="InterPro" id="IPR015421">
    <property type="entry name" value="PyrdxlP-dep_Trfase_major"/>
</dbReference>
<dbReference type="InterPro" id="IPR015422">
    <property type="entry name" value="PyrdxlP-dep_Trfase_small"/>
</dbReference>
<dbReference type="InterPro" id="IPR001085">
    <property type="entry name" value="Ser_HO-MeTrfase"/>
</dbReference>
<dbReference type="InterPro" id="IPR049943">
    <property type="entry name" value="Ser_HO-MeTrfase-like"/>
</dbReference>
<dbReference type="InterPro" id="IPR019798">
    <property type="entry name" value="Ser_HO-MeTrfase_PLP_BS"/>
</dbReference>
<dbReference type="InterPro" id="IPR039429">
    <property type="entry name" value="SHMT-like_dom"/>
</dbReference>
<dbReference type="NCBIfam" id="NF000586">
    <property type="entry name" value="PRK00011.1"/>
    <property type="match status" value="1"/>
</dbReference>
<dbReference type="PANTHER" id="PTHR11680">
    <property type="entry name" value="SERINE HYDROXYMETHYLTRANSFERASE"/>
    <property type="match status" value="1"/>
</dbReference>
<dbReference type="PANTHER" id="PTHR11680:SF35">
    <property type="entry name" value="SERINE HYDROXYMETHYLTRANSFERASE 1"/>
    <property type="match status" value="1"/>
</dbReference>
<dbReference type="Pfam" id="PF00464">
    <property type="entry name" value="SHMT"/>
    <property type="match status" value="1"/>
</dbReference>
<dbReference type="PIRSF" id="PIRSF000412">
    <property type="entry name" value="SHMT"/>
    <property type="match status" value="1"/>
</dbReference>
<dbReference type="SUPFAM" id="SSF53383">
    <property type="entry name" value="PLP-dependent transferases"/>
    <property type="match status" value="1"/>
</dbReference>
<dbReference type="PROSITE" id="PS00096">
    <property type="entry name" value="SHMT"/>
    <property type="match status" value="1"/>
</dbReference>
<sequence length="417" mass="45490">MIDNILFDLIEREAKRERENIELIASENFVSSDVRQAVGSVLTNKYAEGYPSKRYYGGCSVVDDIENLAISRAMELFGASYANVQPHSGSQANMAAIMSLIKPGDKILGMELSHGGHLTHGSKVSFSGMFFDAYSYGVSRDSEMIDYDDVRNIAKACRPNLIIAGASSYSREIDFKKFREIANEVSAYLLCDIAHTAGLVATGFHNSPIDVAHLTTSTTHKTLRGPRGGLILAGKEFNTMINYNNKERTLDLAVNSCVFPGTQGGPLMHVIAGKAVAFKEALNKEFKDYISRVIENTKAMAEYFISEGLRIVSGGTDNHLFLVDLSGLGITGADAEKILESVNITLNKNAIPFDSKNPSVASGIRIGAPAITSRGLNRDDSIKVAHFIIRALKTKSTDELRKIKQEVIGFISSFDMP</sequence>
<reference key="1">
    <citation type="journal article" date="2008" name="PLoS Genet.">
        <title>The genome of Borrelia recurrentis, the agent of deadly louse-borne relapsing fever, is a degraded subset of tick-borne Borrelia duttonii.</title>
        <authorList>
            <person name="Lescot M."/>
            <person name="Audic S."/>
            <person name="Robert C."/>
            <person name="Nguyen T.T."/>
            <person name="Blanc G."/>
            <person name="Cutler S.J."/>
            <person name="Wincker P."/>
            <person name="Couloux A."/>
            <person name="Claverie J.-M."/>
            <person name="Raoult D."/>
            <person name="Drancourt M."/>
        </authorList>
    </citation>
    <scope>NUCLEOTIDE SEQUENCE [LARGE SCALE GENOMIC DNA]</scope>
    <source>
        <strain>A1</strain>
    </source>
</reference>
<evidence type="ECO:0000255" key="1">
    <source>
        <dbReference type="HAMAP-Rule" id="MF_00051"/>
    </source>
</evidence>
<feature type="chain" id="PRO_1000091522" description="Serine hydroxymethyltransferase">
    <location>
        <begin position="1"/>
        <end position="417"/>
    </location>
</feature>
<feature type="binding site" evidence="1">
    <location>
        <position position="112"/>
    </location>
    <ligand>
        <name>(6S)-5,6,7,8-tetrahydrofolate</name>
        <dbReference type="ChEBI" id="CHEBI:57453"/>
    </ligand>
</feature>
<feature type="binding site" evidence="1">
    <location>
        <begin position="116"/>
        <end position="118"/>
    </location>
    <ligand>
        <name>(6S)-5,6,7,8-tetrahydrofolate</name>
        <dbReference type="ChEBI" id="CHEBI:57453"/>
    </ligand>
</feature>
<feature type="binding site" evidence="1">
    <location>
        <position position="247"/>
    </location>
    <ligand>
        <name>(6S)-5,6,7,8-tetrahydrofolate</name>
        <dbReference type="ChEBI" id="CHEBI:57453"/>
    </ligand>
</feature>
<feature type="site" description="Plays an important role in substrate specificity" evidence="1">
    <location>
        <position position="220"/>
    </location>
</feature>
<feature type="modified residue" description="N6-(pyridoxal phosphate)lysine" evidence="1">
    <location>
        <position position="221"/>
    </location>
</feature>
<accession>B5RPU9</accession>
<comment type="function">
    <text evidence="1">Catalyzes the reversible interconversion of serine and glycine with tetrahydrofolate (THF) serving as the one-carbon carrier. This reaction serves as the major source of one-carbon groups required for the biosynthesis of purines, thymidylate, methionine, and other important biomolecules. Also exhibits THF-independent aldolase activity toward beta-hydroxyamino acids, producing glycine and aldehydes, via a retro-aldol mechanism.</text>
</comment>
<comment type="catalytic activity">
    <reaction evidence="1">
        <text>(6R)-5,10-methylene-5,6,7,8-tetrahydrofolate + glycine + H2O = (6S)-5,6,7,8-tetrahydrofolate + L-serine</text>
        <dbReference type="Rhea" id="RHEA:15481"/>
        <dbReference type="ChEBI" id="CHEBI:15377"/>
        <dbReference type="ChEBI" id="CHEBI:15636"/>
        <dbReference type="ChEBI" id="CHEBI:33384"/>
        <dbReference type="ChEBI" id="CHEBI:57305"/>
        <dbReference type="ChEBI" id="CHEBI:57453"/>
        <dbReference type="EC" id="2.1.2.1"/>
    </reaction>
</comment>
<comment type="cofactor">
    <cofactor evidence="1">
        <name>pyridoxal 5'-phosphate</name>
        <dbReference type="ChEBI" id="CHEBI:597326"/>
    </cofactor>
</comment>
<comment type="pathway">
    <text evidence="1">One-carbon metabolism; tetrahydrofolate interconversion.</text>
</comment>
<comment type="pathway">
    <text evidence="1">Amino-acid biosynthesis; glycine biosynthesis; glycine from L-serine: step 1/1.</text>
</comment>
<comment type="subunit">
    <text evidence="1">Homodimer.</text>
</comment>
<comment type="subcellular location">
    <subcellularLocation>
        <location evidence="1">Cytoplasm</location>
    </subcellularLocation>
</comment>
<comment type="similarity">
    <text evidence="1">Belongs to the SHMT family.</text>
</comment>
<organism>
    <name type="scientific">Borrelia recurrentis (strain A1)</name>
    <dbReference type="NCBI Taxonomy" id="412418"/>
    <lineage>
        <taxon>Bacteria</taxon>
        <taxon>Pseudomonadati</taxon>
        <taxon>Spirochaetota</taxon>
        <taxon>Spirochaetia</taxon>
        <taxon>Spirochaetales</taxon>
        <taxon>Borreliaceae</taxon>
        <taxon>Borrelia</taxon>
    </lineage>
</organism>
<proteinExistence type="inferred from homology"/>
<keyword id="KW-0028">Amino-acid biosynthesis</keyword>
<keyword id="KW-0963">Cytoplasm</keyword>
<keyword id="KW-0554">One-carbon metabolism</keyword>
<keyword id="KW-0663">Pyridoxal phosphate</keyword>
<keyword id="KW-0808">Transferase</keyword>